<keyword id="KW-0007">Acetylation</keyword>
<keyword id="KW-0020">Allergen</keyword>
<keyword id="KW-0106">Calcium</keyword>
<keyword id="KW-0903">Direct protein sequencing</keyword>
<keyword id="KW-0479">Metal-binding</keyword>
<keyword id="KW-0514">Muscle protein</keyword>
<keyword id="KW-0677">Repeat</keyword>
<protein>
    <recommendedName>
        <fullName evidence="7">Parvalbumin beta 2</fullName>
    </recommendedName>
</protein>
<dbReference type="SMR" id="P86765"/>
<dbReference type="Allergome" id="7643">
    <property type="allergen name" value="Mer mr 1"/>
</dbReference>
<dbReference type="iPTMnet" id="P86765"/>
<dbReference type="GO" id="GO:0005737">
    <property type="term" value="C:cytoplasm"/>
    <property type="evidence" value="ECO:0007669"/>
    <property type="project" value="TreeGrafter"/>
</dbReference>
<dbReference type="GO" id="GO:0005509">
    <property type="term" value="F:calcium ion binding"/>
    <property type="evidence" value="ECO:0007669"/>
    <property type="project" value="InterPro"/>
</dbReference>
<dbReference type="CDD" id="cd16255">
    <property type="entry name" value="EFh_parvalbumin_beta"/>
    <property type="match status" value="1"/>
</dbReference>
<dbReference type="FunFam" id="1.10.238.10:FF:000060">
    <property type="entry name" value="Parvalbumin, thymic"/>
    <property type="match status" value="1"/>
</dbReference>
<dbReference type="Gene3D" id="1.10.238.10">
    <property type="entry name" value="EF-hand"/>
    <property type="match status" value="1"/>
</dbReference>
<dbReference type="InterPro" id="IPR011992">
    <property type="entry name" value="EF-hand-dom_pair"/>
</dbReference>
<dbReference type="InterPro" id="IPR018247">
    <property type="entry name" value="EF_Hand_1_Ca_BS"/>
</dbReference>
<dbReference type="InterPro" id="IPR002048">
    <property type="entry name" value="EF_hand_dom"/>
</dbReference>
<dbReference type="InterPro" id="IPR008080">
    <property type="entry name" value="Parvalbumin"/>
</dbReference>
<dbReference type="PANTHER" id="PTHR11653:SF12">
    <property type="entry name" value="PARVALBUMIN"/>
    <property type="match status" value="1"/>
</dbReference>
<dbReference type="PANTHER" id="PTHR11653">
    <property type="entry name" value="PARVALBUMIN ALPHA"/>
    <property type="match status" value="1"/>
</dbReference>
<dbReference type="Pfam" id="PF13499">
    <property type="entry name" value="EF-hand_7"/>
    <property type="match status" value="1"/>
</dbReference>
<dbReference type="PRINTS" id="PR01697">
    <property type="entry name" value="PARVALBUMIN"/>
</dbReference>
<dbReference type="SUPFAM" id="SSF47473">
    <property type="entry name" value="EF-hand"/>
    <property type="match status" value="1"/>
</dbReference>
<dbReference type="PROSITE" id="PS00018">
    <property type="entry name" value="EF_HAND_1"/>
    <property type="match status" value="2"/>
</dbReference>
<dbReference type="PROSITE" id="PS50222">
    <property type="entry name" value="EF_HAND_2"/>
    <property type="match status" value="2"/>
</dbReference>
<evidence type="ECO:0000250" key="1">
    <source>
        <dbReference type="UniProtKB" id="P02621"/>
    </source>
</evidence>
<evidence type="ECO:0000250" key="2">
    <source>
        <dbReference type="UniProtKB" id="P02622"/>
    </source>
</evidence>
<evidence type="ECO:0000250" key="3">
    <source>
        <dbReference type="UniProtKB" id="P02624"/>
    </source>
</evidence>
<evidence type="ECO:0000255" key="4"/>
<evidence type="ECO:0000255" key="5">
    <source>
        <dbReference type="PROSITE-ProRule" id="PRU00448"/>
    </source>
</evidence>
<evidence type="ECO:0000269" key="6">
    <source>
    </source>
</evidence>
<evidence type="ECO:0000303" key="7">
    <source>
    </source>
</evidence>
<evidence type="ECO:0000305" key="8"/>
<name>PRVB2_MERME</name>
<accession>P86765</accession>
<proteinExistence type="evidence at protein level"/>
<reference evidence="8" key="1">
    <citation type="journal article" date="2010" name="J. Proteome Res.">
        <title>Extensive de novo sequencing of new parvalbumin isoforms using a novel combination of bottom-up proteomics, accurate molecular mass measurement by FTICR-MS, and selected MS/MS ion monitoring.</title>
        <authorList>
            <person name="Carrera M."/>
            <person name="Canas B."/>
            <person name="Vazquez J."/>
            <person name="Gallardo J.M."/>
        </authorList>
    </citation>
    <scope>PROTEIN SEQUENCE</scope>
    <scope>MASS SPECTROMETRY</scope>
    <scope>ACETYLATION AT ALA-1</scope>
    <source>
        <tissue evidence="6">Muscle</tissue>
    </source>
</reference>
<organism>
    <name type="scientific">Merluccius merluccius</name>
    <name type="common">European hake</name>
    <dbReference type="NCBI Taxonomy" id="8063"/>
    <lineage>
        <taxon>Eukaryota</taxon>
        <taxon>Metazoa</taxon>
        <taxon>Chordata</taxon>
        <taxon>Craniata</taxon>
        <taxon>Vertebrata</taxon>
        <taxon>Euteleostomi</taxon>
        <taxon>Actinopterygii</taxon>
        <taxon>Neopterygii</taxon>
        <taxon>Teleostei</taxon>
        <taxon>Neoteleostei</taxon>
        <taxon>Acanthomorphata</taxon>
        <taxon>Zeiogadaria</taxon>
        <taxon>Gadariae</taxon>
        <taxon>Gadiformes</taxon>
        <taxon>Gadoidei</taxon>
        <taxon>Merlucciidae</taxon>
        <taxon>Merluccius</taxon>
    </lineage>
</organism>
<sequence length="108" mass="11281">AFAGILADADITAALAACKAEGSFKHGEFFTKIGLKGKSAADIKKVFGIIDQDKSDFVEEDELKLFLQNFSAGARALTDAETATFLKAGDSDGDGKIGVDEFAAMVKG</sequence>
<comment type="function">
    <text evidence="2 3">In muscle, parvalbumin is thought to be involved in relaxation after contraction. It binds two calcium ions (By similarity).</text>
</comment>
<comment type="mass spectrometry" mass="11315.737" error="0.0054" method="Electrospray" evidence="6"/>
<comment type="miscellaneous">
    <text evidence="2 6">Is regarded as an important allergen.</text>
</comment>
<comment type="miscellaneous">
    <text evidence="6">On the 2D-gel the determined pI of this protein is: 4.53, its MW is: 11.30 kDa.</text>
</comment>
<comment type="similarity">
    <text evidence="4">Belongs to the parvalbumin family.</text>
</comment>
<feature type="chain" id="PRO_0000399425" description="Parvalbumin beta 2">
    <location>
        <begin position="1"/>
        <end position="108"/>
    </location>
</feature>
<feature type="domain" description="EF-hand 1" evidence="5">
    <location>
        <begin position="38"/>
        <end position="73"/>
    </location>
</feature>
<feature type="domain" description="EF-hand 2" evidence="5">
    <location>
        <begin position="77"/>
        <end position="108"/>
    </location>
</feature>
<feature type="binding site" evidence="1 5">
    <location>
        <position position="51"/>
    </location>
    <ligand>
        <name>Ca(2+)</name>
        <dbReference type="ChEBI" id="CHEBI:29108"/>
        <label>1</label>
    </ligand>
</feature>
<feature type="binding site" evidence="1 5">
    <location>
        <position position="53"/>
    </location>
    <ligand>
        <name>Ca(2+)</name>
        <dbReference type="ChEBI" id="CHEBI:29108"/>
        <label>1</label>
    </ligand>
</feature>
<feature type="binding site" evidence="1 5">
    <location>
        <position position="55"/>
    </location>
    <ligand>
        <name>Ca(2+)</name>
        <dbReference type="ChEBI" id="CHEBI:29108"/>
        <label>1</label>
    </ligand>
</feature>
<feature type="binding site" evidence="1">
    <location>
        <position position="57"/>
    </location>
    <ligand>
        <name>Ca(2+)</name>
        <dbReference type="ChEBI" id="CHEBI:29108"/>
        <label>1</label>
    </ligand>
</feature>
<feature type="binding site" evidence="1">
    <location>
        <position position="59"/>
    </location>
    <ligand>
        <name>Ca(2+)</name>
        <dbReference type="ChEBI" id="CHEBI:29108"/>
        <label>1</label>
    </ligand>
</feature>
<feature type="binding site" evidence="1 5">
    <location>
        <position position="62"/>
    </location>
    <ligand>
        <name>Ca(2+)</name>
        <dbReference type="ChEBI" id="CHEBI:29108"/>
        <label>1</label>
    </ligand>
</feature>
<feature type="binding site" evidence="1 5">
    <location>
        <position position="90"/>
    </location>
    <ligand>
        <name>Ca(2+)</name>
        <dbReference type="ChEBI" id="CHEBI:29108"/>
        <label>2</label>
    </ligand>
</feature>
<feature type="binding site" evidence="1 5">
    <location>
        <position position="92"/>
    </location>
    <ligand>
        <name>Ca(2+)</name>
        <dbReference type="ChEBI" id="CHEBI:29108"/>
        <label>2</label>
    </ligand>
</feature>
<feature type="binding site" evidence="1 5">
    <location>
        <position position="94"/>
    </location>
    <ligand>
        <name>Ca(2+)</name>
        <dbReference type="ChEBI" id="CHEBI:29108"/>
        <label>2</label>
    </ligand>
</feature>
<feature type="binding site" evidence="5">
    <location>
        <position position="96"/>
    </location>
    <ligand>
        <name>Ca(2+)</name>
        <dbReference type="ChEBI" id="CHEBI:29108"/>
        <label>2</label>
    </ligand>
</feature>
<feature type="binding site" evidence="1 5">
    <location>
        <position position="101"/>
    </location>
    <ligand>
        <name>Ca(2+)</name>
        <dbReference type="ChEBI" id="CHEBI:29108"/>
        <label>2</label>
    </ligand>
</feature>
<feature type="modified residue" description="N-acetylalanine" evidence="6">
    <location>
        <position position="1"/>
    </location>
</feature>
<feature type="unsure residue" description="I or L" evidence="6">
    <location>
        <position position="5"/>
    </location>
</feature>
<feature type="unsure residue" description="L or I" evidence="6">
    <location>
        <position position="6"/>
    </location>
</feature>
<feature type="unsure residue" description="I or L" evidence="6">
    <location>
        <position position="11"/>
    </location>
</feature>
<feature type="unsure residue" description="L or I" evidence="6">
    <location>
        <position position="15"/>
    </location>
</feature>
<feature type="unsure residue" description="K or Q" evidence="6">
    <location>
        <position position="19"/>
    </location>
</feature>
<feature type="unsure residue" description="K or Q" evidence="6">
    <location>
        <position position="25"/>
    </location>
</feature>
<feature type="unsure residue" description="K or Q" evidence="6">
    <location>
        <position position="32"/>
    </location>
</feature>
<feature type="unsure residue" description="I or L" evidence="6">
    <location>
        <position position="33"/>
    </location>
</feature>
<feature type="unsure residue" description="L or I" evidence="6">
    <location>
        <position position="35"/>
    </location>
</feature>
<feature type="unsure residue" description="K or Q" evidence="6">
    <location>
        <position position="36"/>
    </location>
</feature>
<feature type="unsure residue" description="K or Q" evidence="6">
    <location>
        <position position="38"/>
    </location>
</feature>
<feature type="unsure residue" description="I or L" evidence="6">
    <location>
        <position position="43"/>
    </location>
</feature>
<feature type="unsure residue" description="K or Q" evidence="6">
    <location>
        <position position="44"/>
    </location>
</feature>
<feature type="unsure residue" description="K or Q" evidence="6">
    <location>
        <position position="45"/>
    </location>
</feature>
<feature type="unsure residue" description="I or L" evidence="6">
    <location>
        <position position="49"/>
    </location>
</feature>
<feature type="unsure residue" description="I or L" evidence="6">
    <location>
        <position position="50"/>
    </location>
</feature>
<feature type="unsure residue" description="Q or K" evidence="6">
    <location>
        <position position="52"/>
    </location>
</feature>
<feature type="unsure residue" description="K or Q" evidence="6">
    <location>
        <position position="54"/>
    </location>
</feature>
<feature type="unsure residue" description="L or I" evidence="6">
    <location>
        <position position="63"/>
    </location>
</feature>
<feature type="unsure residue" description="K or Q" evidence="6">
    <location>
        <position position="64"/>
    </location>
</feature>
<feature type="unsure residue" description="L or I" evidence="6">
    <location>
        <position position="65"/>
    </location>
</feature>
<feature type="unsure residue" description="L or I" evidence="6">
    <location>
        <position position="67"/>
    </location>
</feature>
<feature type="unsure residue" description="Q or K" evidence="6">
    <location>
        <position position="68"/>
    </location>
</feature>
<feature type="unsure residue" description="L or I" evidence="6">
    <location>
        <position position="77"/>
    </location>
</feature>
<feature type="unsure residue" description="L or I" evidence="6">
    <location>
        <position position="86"/>
    </location>
</feature>
<feature type="unsure residue" description="K or Q" evidence="6">
    <location>
        <position position="87"/>
    </location>
</feature>
<feature type="unsure residue" description="K or Q" evidence="6">
    <location>
        <position position="96"/>
    </location>
</feature>
<feature type="unsure residue" description="I or L" evidence="6">
    <location>
        <position position="97"/>
    </location>
</feature>
<feature type="unsure residue" description="K or Q" evidence="6">
    <location>
        <position position="107"/>
    </location>
</feature>